<organism>
    <name type="scientific">Arabidopsis thaliana</name>
    <name type="common">Mouse-ear cress</name>
    <dbReference type="NCBI Taxonomy" id="3702"/>
    <lineage>
        <taxon>Eukaryota</taxon>
        <taxon>Viridiplantae</taxon>
        <taxon>Streptophyta</taxon>
        <taxon>Embryophyta</taxon>
        <taxon>Tracheophyta</taxon>
        <taxon>Spermatophyta</taxon>
        <taxon>Magnoliopsida</taxon>
        <taxon>eudicotyledons</taxon>
        <taxon>Gunneridae</taxon>
        <taxon>Pentapetalae</taxon>
        <taxon>rosids</taxon>
        <taxon>malvids</taxon>
        <taxon>Brassicales</taxon>
        <taxon>Brassicaceae</taxon>
        <taxon>Camelineae</taxon>
        <taxon>Arabidopsis</taxon>
    </lineage>
</organism>
<keyword id="KW-0067">ATP-binding</keyword>
<keyword id="KW-0963">Cytoplasm</keyword>
<keyword id="KW-0347">Helicase</keyword>
<keyword id="KW-0378">Hydrolase</keyword>
<keyword id="KW-0507">mRNA processing</keyword>
<keyword id="KW-0509">mRNA transport</keyword>
<keyword id="KW-0547">Nucleotide-binding</keyword>
<keyword id="KW-0597">Phosphoprotein</keyword>
<keyword id="KW-1185">Reference proteome</keyword>
<keyword id="KW-0694">RNA-binding</keyword>
<keyword id="KW-0810">Translation regulation</keyword>
<keyword id="KW-0813">Transport</keyword>
<feature type="chain" id="PRO_0000239154" description="DEAD-box ATP-dependent RNA helicase 12">
    <location>
        <begin position="1"/>
        <end position="498"/>
    </location>
</feature>
<feature type="domain" description="Helicase ATP-binding" evidence="3">
    <location>
        <begin position="155"/>
        <end position="325"/>
    </location>
</feature>
<feature type="domain" description="Helicase C-terminal" evidence="4">
    <location>
        <begin position="335"/>
        <end position="495"/>
    </location>
</feature>
<feature type="region of interest" description="Disordered" evidence="5">
    <location>
        <begin position="1"/>
        <end position="114"/>
    </location>
</feature>
<feature type="short sequence motif" description="Q motif">
    <location>
        <begin position="124"/>
        <end position="152"/>
    </location>
</feature>
<feature type="short sequence motif" description="DEAD box">
    <location>
        <begin position="273"/>
        <end position="276"/>
    </location>
</feature>
<feature type="compositionally biased region" description="Low complexity" evidence="5">
    <location>
        <begin position="27"/>
        <end position="65"/>
    </location>
</feature>
<feature type="compositionally biased region" description="Polar residues" evidence="5">
    <location>
        <begin position="74"/>
        <end position="96"/>
    </location>
</feature>
<feature type="binding site" evidence="3">
    <location>
        <begin position="168"/>
        <end position="175"/>
    </location>
    <ligand>
        <name>ATP</name>
        <dbReference type="ChEBI" id="CHEBI:30616"/>
    </ligand>
</feature>
<feature type="modified residue" description="Phosphothreonine" evidence="2">
    <location>
        <position position="230"/>
    </location>
</feature>
<feature type="sequence conflict" description="In Ref. 1; CAA09203." evidence="6" ref="1">
    <original>D</original>
    <variation>N</variation>
    <location>
        <position position="23"/>
    </location>
</feature>
<feature type="sequence conflict" description="In Ref. 1; CAA09203." evidence="6" ref="1">
    <original>R</original>
    <variation>K</variation>
    <location>
        <position position="68"/>
    </location>
</feature>
<feature type="sequence conflict" description="In Ref. 1; CAA09203." evidence="6" ref="1">
    <original>G</original>
    <variation>E</variation>
    <location>
        <position position="74"/>
    </location>
</feature>
<feature type="sequence conflict" description="In Ref. 1; CAA09203." evidence="6" ref="1">
    <original>D</original>
    <variation>N</variation>
    <location>
        <position position="99"/>
    </location>
</feature>
<feature type="sequence conflict" description="In Ref. 1; CAA09203." evidence="6" ref="1">
    <original>D</original>
    <variation>N</variation>
    <location>
        <position position="128"/>
    </location>
</feature>
<name>RH12_ARATH</name>
<dbReference type="EC" id="3.6.4.13"/>
<dbReference type="EMBL" id="AJ010464">
    <property type="protein sequence ID" value="CAA09203.1"/>
    <property type="molecule type" value="mRNA"/>
</dbReference>
<dbReference type="EMBL" id="AL137898">
    <property type="protein sequence ID" value="CAB71054.1"/>
    <property type="molecule type" value="Genomic_DNA"/>
</dbReference>
<dbReference type="EMBL" id="CP002686">
    <property type="protein sequence ID" value="AEE80177.1"/>
    <property type="molecule type" value="Genomic_DNA"/>
</dbReference>
<dbReference type="EMBL" id="CP002686">
    <property type="protein sequence ID" value="AEE80178.1"/>
    <property type="molecule type" value="Genomic_DNA"/>
</dbReference>
<dbReference type="EMBL" id="AY120712">
    <property type="protein sequence ID" value="AAM53270.1"/>
    <property type="molecule type" value="mRNA"/>
</dbReference>
<dbReference type="EMBL" id="BT000038">
    <property type="protein sequence ID" value="AAN15357.1"/>
    <property type="molecule type" value="mRNA"/>
</dbReference>
<dbReference type="PIR" id="T47916">
    <property type="entry name" value="T47916"/>
</dbReference>
<dbReference type="PIR" id="T51743">
    <property type="entry name" value="T51743"/>
</dbReference>
<dbReference type="RefSeq" id="NP_191683.1">
    <property type="nucleotide sequence ID" value="NM_115988.3"/>
</dbReference>
<dbReference type="RefSeq" id="NP_974472.1">
    <property type="nucleotide sequence ID" value="NM_202743.1"/>
</dbReference>
<dbReference type="SMR" id="Q9M2E0"/>
<dbReference type="BioGRID" id="10610">
    <property type="interactions" value="1"/>
</dbReference>
<dbReference type="FunCoup" id="Q9M2E0">
    <property type="interactions" value="4933"/>
</dbReference>
<dbReference type="IntAct" id="Q9M2E0">
    <property type="interactions" value="1"/>
</dbReference>
<dbReference type="STRING" id="3702.Q9M2E0"/>
<dbReference type="PaxDb" id="3702-AT3G61240.1"/>
<dbReference type="ProteomicsDB" id="236924"/>
<dbReference type="EnsemblPlants" id="AT3G61240.1">
    <property type="protein sequence ID" value="AT3G61240.1"/>
    <property type="gene ID" value="AT3G61240"/>
</dbReference>
<dbReference type="EnsemblPlants" id="AT3G61240.2">
    <property type="protein sequence ID" value="AT3G61240.2"/>
    <property type="gene ID" value="AT3G61240"/>
</dbReference>
<dbReference type="GeneID" id="825296"/>
<dbReference type="Gramene" id="AT3G61240.1">
    <property type="protein sequence ID" value="AT3G61240.1"/>
    <property type="gene ID" value="AT3G61240"/>
</dbReference>
<dbReference type="Gramene" id="AT3G61240.2">
    <property type="protein sequence ID" value="AT3G61240.2"/>
    <property type="gene ID" value="AT3G61240"/>
</dbReference>
<dbReference type="KEGG" id="ath:AT3G61240"/>
<dbReference type="Araport" id="AT3G61240"/>
<dbReference type="TAIR" id="AT3G61240">
    <property type="gene designation" value="RH12"/>
</dbReference>
<dbReference type="eggNOG" id="KOG0326">
    <property type="taxonomic scope" value="Eukaryota"/>
</dbReference>
<dbReference type="HOGENOM" id="CLU_003041_30_0_1"/>
<dbReference type="InParanoid" id="Q9M2E0"/>
<dbReference type="OMA" id="LCVAEYH"/>
<dbReference type="OrthoDB" id="10265785at2759"/>
<dbReference type="PhylomeDB" id="Q9M2E0"/>
<dbReference type="CD-CODE" id="4299E36E">
    <property type="entry name" value="Nucleolus"/>
</dbReference>
<dbReference type="PRO" id="PR:Q9M2E0"/>
<dbReference type="Proteomes" id="UP000006548">
    <property type="component" value="Chromosome 3"/>
</dbReference>
<dbReference type="ExpressionAtlas" id="Q9M2E0">
    <property type="expression patterns" value="baseline and differential"/>
</dbReference>
<dbReference type="GO" id="GO:0036464">
    <property type="term" value="C:cytoplasmic ribonucleoprotein granule"/>
    <property type="evidence" value="ECO:0000314"/>
    <property type="project" value="FlyBase"/>
</dbReference>
<dbReference type="GO" id="GO:0000932">
    <property type="term" value="C:P-body"/>
    <property type="evidence" value="ECO:0007669"/>
    <property type="project" value="UniProtKB-SubCell"/>
</dbReference>
<dbReference type="GO" id="GO:0005524">
    <property type="term" value="F:ATP binding"/>
    <property type="evidence" value="ECO:0007669"/>
    <property type="project" value="UniProtKB-KW"/>
</dbReference>
<dbReference type="GO" id="GO:0016887">
    <property type="term" value="F:ATP hydrolysis activity"/>
    <property type="evidence" value="ECO:0007669"/>
    <property type="project" value="RHEA"/>
</dbReference>
<dbReference type="GO" id="GO:0003729">
    <property type="term" value="F:mRNA binding"/>
    <property type="evidence" value="ECO:0000314"/>
    <property type="project" value="TAIR"/>
</dbReference>
<dbReference type="GO" id="GO:0003724">
    <property type="term" value="F:RNA helicase activity"/>
    <property type="evidence" value="ECO:0007669"/>
    <property type="project" value="UniProtKB-EC"/>
</dbReference>
<dbReference type="GO" id="GO:0006397">
    <property type="term" value="P:mRNA processing"/>
    <property type="evidence" value="ECO:0007669"/>
    <property type="project" value="UniProtKB-KW"/>
</dbReference>
<dbReference type="GO" id="GO:0051028">
    <property type="term" value="P:mRNA transport"/>
    <property type="evidence" value="ECO:0007669"/>
    <property type="project" value="UniProtKB-KW"/>
</dbReference>
<dbReference type="GO" id="GO:0006417">
    <property type="term" value="P:regulation of translation"/>
    <property type="evidence" value="ECO:0007669"/>
    <property type="project" value="UniProtKB-KW"/>
</dbReference>
<dbReference type="CDD" id="cd17940">
    <property type="entry name" value="DEADc_DDX6"/>
    <property type="match status" value="1"/>
</dbReference>
<dbReference type="CDD" id="cd18787">
    <property type="entry name" value="SF2_C_DEAD"/>
    <property type="match status" value="1"/>
</dbReference>
<dbReference type="FunFam" id="3.40.50.300:FF:000114">
    <property type="entry name" value="ATP-dependent RNA helicase DDX6"/>
    <property type="match status" value="1"/>
</dbReference>
<dbReference type="FunFam" id="3.40.50.300:FF:000364">
    <property type="entry name" value="ATP-dependent RNA helicase DDX6"/>
    <property type="match status" value="1"/>
</dbReference>
<dbReference type="Gene3D" id="3.40.50.300">
    <property type="entry name" value="P-loop containing nucleotide triphosphate hydrolases"/>
    <property type="match status" value="2"/>
</dbReference>
<dbReference type="InterPro" id="IPR011545">
    <property type="entry name" value="DEAD/DEAH_box_helicase_dom"/>
</dbReference>
<dbReference type="InterPro" id="IPR014001">
    <property type="entry name" value="Helicase_ATP-bd"/>
</dbReference>
<dbReference type="InterPro" id="IPR001650">
    <property type="entry name" value="Helicase_C-like"/>
</dbReference>
<dbReference type="InterPro" id="IPR027417">
    <property type="entry name" value="P-loop_NTPase"/>
</dbReference>
<dbReference type="InterPro" id="IPR000629">
    <property type="entry name" value="RNA-helicase_DEAD-box_CS"/>
</dbReference>
<dbReference type="InterPro" id="IPR014014">
    <property type="entry name" value="RNA_helicase_DEAD_Q_motif"/>
</dbReference>
<dbReference type="PANTHER" id="PTHR47960">
    <property type="entry name" value="DEAD-BOX ATP-DEPENDENT RNA HELICASE 50"/>
    <property type="match status" value="1"/>
</dbReference>
<dbReference type="Pfam" id="PF00270">
    <property type="entry name" value="DEAD"/>
    <property type="match status" value="1"/>
</dbReference>
<dbReference type="Pfam" id="PF00271">
    <property type="entry name" value="Helicase_C"/>
    <property type="match status" value="1"/>
</dbReference>
<dbReference type="SMART" id="SM00487">
    <property type="entry name" value="DEXDc"/>
    <property type="match status" value="1"/>
</dbReference>
<dbReference type="SMART" id="SM00490">
    <property type="entry name" value="HELICc"/>
    <property type="match status" value="1"/>
</dbReference>
<dbReference type="SUPFAM" id="SSF81995">
    <property type="entry name" value="beta-sandwich domain of Sec23/24"/>
    <property type="match status" value="1"/>
</dbReference>
<dbReference type="SUPFAM" id="SSF52540">
    <property type="entry name" value="P-loop containing nucleoside triphosphate hydrolases"/>
    <property type="match status" value="1"/>
</dbReference>
<dbReference type="PROSITE" id="PS00039">
    <property type="entry name" value="DEAD_ATP_HELICASE"/>
    <property type="match status" value="1"/>
</dbReference>
<dbReference type="PROSITE" id="PS51192">
    <property type="entry name" value="HELICASE_ATP_BIND_1"/>
    <property type="match status" value="1"/>
</dbReference>
<dbReference type="PROSITE" id="PS51194">
    <property type="entry name" value="HELICASE_CTER"/>
    <property type="match status" value="1"/>
</dbReference>
<dbReference type="PROSITE" id="PS51195">
    <property type="entry name" value="Q_MOTIF"/>
    <property type="match status" value="1"/>
</dbReference>
<sequence length="498" mass="56775">MNTNRGRYPPGVGTGRGAPPNPDYHQSYRQQQPPQDQQYVQRGYSQNPQQMQLQQQHQQQQQQQQWSRRPQLPGNASNANEVVQQTTQPEASSDANGQDWKATLRLPPPDTRYQTADVTATKGNEFEDYFLKRDLLKGIYEKGFEKPSPIQEESIPIALTGSDILARAKNGTGKTGAFCIPVLEKIDPNNNVIQAMILVPTRELALQTSQVCKELSKYLNIQVMVTTGGTSLRDDIMRLHQPVHLLVGTPGRILDLTKKGVCVLKDCAMLVMDEADKLLSAEFQPSLEELIQFLPQNRQFLMFSATFPVTVKAFKDRHLRKPYVINLMDQLTLMGVTQYYAFVEERQKVHCLNTLFSKLQINQSIIFCNSVNRVELLAKKITELGYSCFYIHAKMVQDHRNRVFHEFRNGACRNLVCTDLFTRGIDIQAVNVVINFDFPRTSESYLHRVGRSGRFGHLGLAVNLVTYEDRFKMYQTEQELGTEIKPIPSNIDQAIYCQ</sequence>
<protein>
    <recommendedName>
        <fullName>DEAD-box ATP-dependent RNA helicase 12</fullName>
        <ecNumber>3.6.4.13</ecNumber>
    </recommendedName>
</protein>
<gene>
    <name type="primary">RH12</name>
    <name type="ordered locus">At3g61240</name>
    <name type="ORF">T20K12.140</name>
</gene>
<reference key="1">
    <citation type="journal article" date="1999" name="Nucleic Acids Res.">
        <title>The DEAD box RNA helicase family in Arabidopsis thaliana.</title>
        <authorList>
            <person name="Aubourg S."/>
            <person name="Kreis M."/>
            <person name="Lecharny A."/>
        </authorList>
    </citation>
    <scope>NUCLEOTIDE SEQUENCE [MRNA]</scope>
    <source>
        <strain>cv. Columbia</strain>
    </source>
</reference>
<reference key="2">
    <citation type="journal article" date="2000" name="Nature">
        <title>Sequence and analysis of chromosome 3 of the plant Arabidopsis thaliana.</title>
        <authorList>
            <person name="Salanoubat M."/>
            <person name="Lemcke K."/>
            <person name="Rieger M."/>
            <person name="Ansorge W."/>
            <person name="Unseld M."/>
            <person name="Fartmann B."/>
            <person name="Valle G."/>
            <person name="Bloecker H."/>
            <person name="Perez-Alonso M."/>
            <person name="Obermaier B."/>
            <person name="Delseny M."/>
            <person name="Boutry M."/>
            <person name="Grivell L.A."/>
            <person name="Mache R."/>
            <person name="Puigdomenech P."/>
            <person name="De Simone V."/>
            <person name="Choisne N."/>
            <person name="Artiguenave F."/>
            <person name="Robert C."/>
            <person name="Brottier P."/>
            <person name="Wincker P."/>
            <person name="Cattolico L."/>
            <person name="Weissenbach J."/>
            <person name="Saurin W."/>
            <person name="Quetier F."/>
            <person name="Schaefer M."/>
            <person name="Mueller-Auer S."/>
            <person name="Gabel C."/>
            <person name="Fuchs M."/>
            <person name="Benes V."/>
            <person name="Wurmbach E."/>
            <person name="Drzonek H."/>
            <person name="Erfle H."/>
            <person name="Jordan N."/>
            <person name="Bangert S."/>
            <person name="Wiedelmann R."/>
            <person name="Kranz H."/>
            <person name="Voss H."/>
            <person name="Holland R."/>
            <person name="Brandt P."/>
            <person name="Nyakatura G."/>
            <person name="Vezzi A."/>
            <person name="D'Angelo M."/>
            <person name="Pallavicini A."/>
            <person name="Toppo S."/>
            <person name="Simionati B."/>
            <person name="Conrad A."/>
            <person name="Hornischer K."/>
            <person name="Kauer G."/>
            <person name="Loehnert T.-H."/>
            <person name="Nordsiek G."/>
            <person name="Reichelt J."/>
            <person name="Scharfe M."/>
            <person name="Schoen O."/>
            <person name="Bargues M."/>
            <person name="Terol J."/>
            <person name="Climent J."/>
            <person name="Navarro P."/>
            <person name="Collado C."/>
            <person name="Perez-Perez A."/>
            <person name="Ottenwaelder B."/>
            <person name="Duchemin D."/>
            <person name="Cooke R."/>
            <person name="Laudie M."/>
            <person name="Berger-Llauro C."/>
            <person name="Purnelle B."/>
            <person name="Masuy D."/>
            <person name="de Haan M."/>
            <person name="Maarse A.C."/>
            <person name="Alcaraz J.-P."/>
            <person name="Cottet A."/>
            <person name="Casacuberta E."/>
            <person name="Monfort A."/>
            <person name="Argiriou A."/>
            <person name="Flores M."/>
            <person name="Liguori R."/>
            <person name="Vitale D."/>
            <person name="Mannhaupt G."/>
            <person name="Haase D."/>
            <person name="Schoof H."/>
            <person name="Rudd S."/>
            <person name="Zaccaria P."/>
            <person name="Mewes H.-W."/>
            <person name="Mayer K.F.X."/>
            <person name="Kaul S."/>
            <person name="Town C.D."/>
            <person name="Koo H.L."/>
            <person name="Tallon L.J."/>
            <person name="Jenkins J."/>
            <person name="Rooney T."/>
            <person name="Rizzo M."/>
            <person name="Walts A."/>
            <person name="Utterback T."/>
            <person name="Fujii C.Y."/>
            <person name="Shea T.P."/>
            <person name="Creasy T.H."/>
            <person name="Haas B."/>
            <person name="Maiti R."/>
            <person name="Wu D."/>
            <person name="Peterson J."/>
            <person name="Van Aken S."/>
            <person name="Pai G."/>
            <person name="Militscher J."/>
            <person name="Sellers P."/>
            <person name="Gill J.E."/>
            <person name="Feldblyum T.V."/>
            <person name="Preuss D."/>
            <person name="Lin X."/>
            <person name="Nierman W.C."/>
            <person name="Salzberg S.L."/>
            <person name="White O."/>
            <person name="Venter J.C."/>
            <person name="Fraser C.M."/>
            <person name="Kaneko T."/>
            <person name="Nakamura Y."/>
            <person name="Sato S."/>
            <person name="Kato T."/>
            <person name="Asamizu E."/>
            <person name="Sasamoto S."/>
            <person name="Kimura T."/>
            <person name="Idesawa K."/>
            <person name="Kawashima K."/>
            <person name="Kishida Y."/>
            <person name="Kiyokawa C."/>
            <person name="Kohara M."/>
            <person name="Matsumoto M."/>
            <person name="Matsuno A."/>
            <person name="Muraki A."/>
            <person name="Nakayama S."/>
            <person name="Nakazaki N."/>
            <person name="Shinpo S."/>
            <person name="Takeuchi C."/>
            <person name="Wada T."/>
            <person name="Watanabe A."/>
            <person name="Yamada M."/>
            <person name="Yasuda M."/>
            <person name="Tabata S."/>
        </authorList>
    </citation>
    <scope>NUCLEOTIDE SEQUENCE [LARGE SCALE GENOMIC DNA]</scope>
    <source>
        <strain>cv. Columbia</strain>
    </source>
</reference>
<reference key="3">
    <citation type="journal article" date="2017" name="Plant J.">
        <title>Araport11: a complete reannotation of the Arabidopsis thaliana reference genome.</title>
        <authorList>
            <person name="Cheng C.Y."/>
            <person name="Krishnakumar V."/>
            <person name="Chan A.P."/>
            <person name="Thibaud-Nissen F."/>
            <person name="Schobel S."/>
            <person name="Town C.D."/>
        </authorList>
    </citation>
    <scope>GENOME REANNOTATION</scope>
    <source>
        <strain>cv. Columbia</strain>
    </source>
</reference>
<reference key="4">
    <citation type="journal article" date="2003" name="Science">
        <title>Empirical analysis of transcriptional activity in the Arabidopsis genome.</title>
        <authorList>
            <person name="Yamada K."/>
            <person name="Lim J."/>
            <person name="Dale J.M."/>
            <person name="Chen H."/>
            <person name="Shinn P."/>
            <person name="Palm C.J."/>
            <person name="Southwick A.M."/>
            <person name="Wu H.C."/>
            <person name="Kim C.J."/>
            <person name="Nguyen M."/>
            <person name="Pham P.K."/>
            <person name="Cheuk R.F."/>
            <person name="Karlin-Newmann G."/>
            <person name="Liu S.X."/>
            <person name="Lam B."/>
            <person name="Sakano H."/>
            <person name="Wu T."/>
            <person name="Yu G."/>
            <person name="Miranda M."/>
            <person name="Quach H.L."/>
            <person name="Tripp M."/>
            <person name="Chang C.H."/>
            <person name="Lee J.M."/>
            <person name="Toriumi M.J."/>
            <person name="Chan M.M."/>
            <person name="Tang C.C."/>
            <person name="Onodera C.S."/>
            <person name="Deng J.M."/>
            <person name="Akiyama K."/>
            <person name="Ansari Y."/>
            <person name="Arakawa T."/>
            <person name="Banh J."/>
            <person name="Banno F."/>
            <person name="Bowser L."/>
            <person name="Brooks S.Y."/>
            <person name="Carninci P."/>
            <person name="Chao Q."/>
            <person name="Choy N."/>
            <person name="Enju A."/>
            <person name="Goldsmith A.D."/>
            <person name="Gurjal M."/>
            <person name="Hansen N.F."/>
            <person name="Hayashizaki Y."/>
            <person name="Johnson-Hopson C."/>
            <person name="Hsuan V.W."/>
            <person name="Iida K."/>
            <person name="Karnes M."/>
            <person name="Khan S."/>
            <person name="Koesema E."/>
            <person name="Ishida J."/>
            <person name="Jiang P.X."/>
            <person name="Jones T."/>
            <person name="Kawai J."/>
            <person name="Kamiya A."/>
            <person name="Meyers C."/>
            <person name="Nakajima M."/>
            <person name="Narusaka M."/>
            <person name="Seki M."/>
            <person name="Sakurai T."/>
            <person name="Satou M."/>
            <person name="Tamse R."/>
            <person name="Vaysberg M."/>
            <person name="Wallender E.K."/>
            <person name="Wong C."/>
            <person name="Yamamura Y."/>
            <person name="Yuan S."/>
            <person name="Shinozaki K."/>
            <person name="Davis R.W."/>
            <person name="Theologis A."/>
            <person name="Ecker J.R."/>
        </authorList>
    </citation>
    <scope>NUCLEOTIDE SEQUENCE [LARGE SCALE MRNA]</scope>
    <source>
        <strain>cv. Columbia</strain>
    </source>
</reference>
<reference key="5">
    <citation type="journal article" date="2004" name="Plant Biotechnol. J.">
        <title>DEAD-box RNA helicases in Arabidopsis thaliana: establishing a link between quantitative expression, gene structure and evolution of a family of genes.</title>
        <authorList>
            <person name="Mingam A."/>
            <person name="Toffano-Nioche C."/>
            <person name="Brunaud V."/>
            <person name="Boudet N."/>
            <person name="Kreis M."/>
            <person name="Lecharny A."/>
        </authorList>
    </citation>
    <scope>GENE FAMILY</scope>
    <scope>NOMENCLATURE</scope>
</reference>
<reference key="6">
    <citation type="journal article" date="2013" name="PLoS ONE">
        <title>Genome-wide comparative in silico analysis of the RNA helicase gene family in Zea mays and Glycine max: a comparison with Arabidopsis and Oryza sativa.</title>
        <authorList>
            <person name="Xu R."/>
            <person name="Zhang S."/>
            <person name="Huang J."/>
            <person name="Zheng C."/>
        </authorList>
    </citation>
    <scope>GENE FAMILY</scope>
</reference>
<proteinExistence type="evidence at transcript level"/>
<comment type="function">
    <text evidence="1">ATP-dependent RNA helicase involved in mRNA turnover, and more specifically in mRNA decapping.</text>
</comment>
<comment type="catalytic activity">
    <reaction>
        <text>ATP + H2O = ADP + phosphate + H(+)</text>
        <dbReference type="Rhea" id="RHEA:13065"/>
        <dbReference type="ChEBI" id="CHEBI:15377"/>
        <dbReference type="ChEBI" id="CHEBI:15378"/>
        <dbReference type="ChEBI" id="CHEBI:30616"/>
        <dbReference type="ChEBI" id="CHEBI:43474"/>
        <dbReference type="ChEBI" id="CHEBI:456216"/>
        <dbReference type="EC" id="3.6.4.13"/>
    </reaction>
</comment>
<comment type="subcellular location">
    <subcellularLocation>
        <location evidence="1">Cytoplasm</location>
        <location evidence="1">P-body</location>
    </subcellularLocation>
    <text evidence="1">Is concentrated in several cytoplasmic foci called P bodies (or cytoplasmic processing bodies) which represent sites of mRNA decapping and 5' to 3' exonucleotidic decay.</text>
</comment>
<comment type="domain">
    <text>The Q motif is unique to and characteristic of the DEAD box family of RNA helicases and controls ATP binding and hydrolysis.</text>
</comment>
<comment type="similarity">
    <text evidence="6">Belongs to the DEAD box helicase family. DDX6/DHH1 subfamily.</text>
</comment>
<evidence type="ECO:0000250" key="1"/>
<evidence type="ECO:0000250" key="2">
    <source>
        <dbReference type="UniProtKB" id="Q9CAI7"/>
    </source>
</evidence>
<evidence type="ECO:0000255" key="3">
    <source>
        <dbReference type="PROSITE-ProRule" id="PRU00541"/>
    </source>
</evidence>
<evidence type="ECO:0000255" key="4">
    <source>
        <dbReference type="PROSITE-ProRule" id="PRU00542"/>
    </source>
</evidence>
<evidence type="ECO:0000256" key="5">
    <source>
        <dbReference type="SAM" id="MobiDB-lite"/>
    </source>
</evidence>
<evidence type="ECO:0000305" key="6"/>
<accession>Q9M2E0</accession>
<accession>Q9ZS08</accession>